<evidence type="ECO:0000250" key="1"/>
<evidence type="ECO:0000305" key="2"/>
<proteinExistence type="evidence at transcript level"/>
<organism>
    <name type="scientific">Aspergillus flavus (strain ATCC 200026 / FGSC A1120 / IAM 13836 / NRRL 3357 / JCM 12722 / SRRC 167)</name>
    <dbReference type="NCBI Taxonomy" id="332952"/>
    <lineage>
        <taxon>Eukaryota</taxon>
        <taxon>Fungi</taxon>
        <taxon>Dikarya</taxon>
        <taxon>Ascomycota</taxon>
        <taxon>Pezizomycotina</taxon>
        <taxon>Eurotiomycetes</taxon>
        <taxon>Eurotiomycetidae</taxon>
        <taxon>Eurotiales</taxon>
        <taxon>Aspergillaceae</taxon>
        <taxon>Aspergillus</taxon>
        <taxon>Aspergillus subgen. Circumdati</taxon>
    </lineage>
</organism>
<protein>
    <recommendedName>
        <fullName>Probable D-xylulose kinase A</fullName>
        <shortName>Xylulokinase A</shortName>
        <ecNumber>2.7.1.17</ecNumber>
    </recommendedName>
</protein>
<sequence length="572" mass="62910">MQGPLYIGFDLSTQQLKALVVNSDLKVVYVSKFDFDADSRGFPIKKGVITNEAEHEVYAPVALWLQALDGVLEGLKKQGLDFARVKGISGAGQQHGSVYWGQDAERLLKELDSGKSLEDQLSGAFSHPYSPNWQDSSTQKECDEFDAFLGGADKLANATGSKAHHRFTGPQILRFQRKYPEVYKKTSRISLVSSFLASLFLGHIAPLDISDACGMNLWNIKQGAYDEKLLQLCAGPSGVEDLKRKLGAVPEDGGINLGQIDRYYIERYGFSSDCTIIPATGDNPATILALPLRPSDAMVSLGTSTTFLMSTPNYMPDPATHFFNHPTTAGLYMFMLCYKNGGLAREHIRDAINDKLGMAGDKDPWANFDKITLETAPMGQKKDSDPMKMGLFFPRPEIVPNLRAGQWRFDYNPADGSLHETNGGWNKPADEARAIVESQFLSLRLRSRGLTASPGQGMPAQPRRVYLVGGGSKNKAIAKVAGEILGGSDGVYKLEIGDNACALGAAYKAVWALERKDGQTFEDLIGQRWREEDFIEKIADGYQKGVFEKYGAALEGFEKMELQVLKQEGETR</sequence>
<dbReference type="EC" id="2.7.1.17"/>
<dbReference type="EMBL" id="EQ963484">
    <property type="protein sequence ID" value="EED46161.1"/>
    <property type="molecule type" value="Genomic_DNA"/>
</dbReference>
<dbReference type="RefSeq" id="XP_002383697.1">
    <property type="nucleotide sequence ID" value="XM_002383656.1"/>
</dbReference>
<dbReference type="SMR" id="B8NTI4"/>
<dbReference type="STRING" id="332952.B8NTI4"/>
<dbReference type="EnsemblFungi" id="EED46161">
    <property type="protein sequence ID" value="EED46161"/>
    <property type="gene ID" value="AFLA_098240"/>
</dbReference>
<dbReference type="VEuPathDB" id="FungiDB:AFLA_010048"/>
<dbReference type="eggNOG" id="KOG2531">
    <property type="taxonomic scope" value="Eukaryota"/>
</dbReference>
<dbReference type="HOGENOM" id="CLU_016149_5_0_1"/>
<dbReference type="OMA" id="NSCALGG"/>
<dbReference type="GO" id="GO:0005829">
    <property type="term" value="C:cytosol"/>
    <property type="evidence" value="ECO:0007669"/>
    <property type="project" value="TreeGrafter"/>
</dbReference>
<dbReference type="GO" id="GO:0005524">
    <property type="term" value="F:ATP binding"/>
    <property type="evidence" value="ECO:0007669"/>
    <property type="project" value="UniProtKB-KW"/>
</dbReference>
<dbReference type="GO" id="GO:0004856">
    <property type="term" value="F:D-xylulokinase activity"/>
    <property type="evidence" value="ECO:0007669"/>
    <property type="project" value="UniProtKB-EC"/>
</dbReference>
<dbReference type="GO" id="GO:0042732">
    <property type="term" value="P:D-xylose metabolic process"/>
    <property type="evidence" value="ECO:0007669"/>
    <property type="project" value="UniProtKB-KW"/>
</dbReference>
<dbReference type="GO" id="GO:0005997">
    <property type="term" value="P:xylulose metabolic process"/>
    <property type="evidence" value="ECO:0007669"/>
    <property type="project" value="TreeGrafter"/>
</dbReference>
<dbReference type="CDD" id="cd07776">
    <property type="entry name" value="ASKHA_NBD_FGGY_SpXK-like"/>
    <property type="match status" value="1"/>
</dbReference>
<dbReference type="FunFam" id="3.30.420.40:FF:000118">
    <property type="entry name" value="Xylulose kinase 2"/>
    <property type="match status" value="1"/>
</dbReference>
<dbReference type="Gene3D" id="3.30.420.40">
    <property type="match status" value="2"/>
</dbReference>
<dbReference type="InterPro" id="IPR043129">
    <property type="entry name" value="ATPase_NBD"/>
</dbReference>
<dbReference type="InterPro" id="IPR042024">
    <property type="entry name" value="D-XK_euk"/>
</dbReference>
<dbReference type="InterPro" id="IPR018485">
    <property type="entry name" value="FGGY_C"/>
</dbReference>
<dbReference type="InterPro" id="IPR018484">
    <property type="entry name" value="FGGY_N"/>
</dbReference>
<dbReference type="PANTHER" id="PTHR10196">
    <property type="entry name" value="SUGAR KINASE"/>
    <property type="match status" value="1"/>
</dbReference>
<dbReference type="PANTHER" id="PTHR10196:SF57">
    <property type="entry name" value="XYLULOSE KINASE"/>
    <property type="match status" value="1"/>
</dbReference>
<dbReference type="Pfam" id="PF02782">
    <property type="entry name" value="FGGY_C"/>
    <property type="match status" value="1"/>
</dbReference>
<dbReference type="Pfam" id="PF00370">
    <property type="entry name" value="FGGY_N"/>
    <property type="match status" value="1"/>
</dbReference>
<dbReference type="SUPFAM" id="SSF53067">
    <property type="entry name" value="Actin-like ATPase domain"/>
    <property type="match status" value="2"/>
</dbReference>
<name>XKS1_ASPFN</name>
<comment type="function">
    <text evidence="1">Highly specific D-xylulose kinase which participates in the catabolism of xylose. Xylose is a major component of hemicelluloses such as xylan. Most fungi utilize D-xylose via three enzymatic reactions, xylose reductase (XR), xylitol dehydrogenase (XDH), and xylulokinase, to form xylulose 5-phosphate, which enters pentose phosphate pathway (By similarity).</text>
</comment>
<comment type="catalytic activity">
    <reaction>
        <text>D-xylulose + ATP = D-xylulose 5-phosphate + ADP + H(+)</text>
        <dbReference type="Rhea" id="RHEA:10964"/>
        <dbReference type="ChEBI" id="CHEBI:15378"/>
        <dbReference type="ChEBI" id="CHEBI:17140"/>
        <dbReference type="ChEBI" id="CHEBI:30616"/>
        <dbReference type="ChEBI" id="CHEBI:57737"/>
        <dbReference type="ChEBI" id="CHEBI:456216"/>
        <dbReference type="EC" id="2.7.1.17"/>
    </reaction>
</comment>
<comment type="subcellular location">
    <subcellularLocation>
        <location evidence="1">Cytoplasm</location>
    </subcellularLocation>
</comment>
<comment type="induction">
    <text>By D-xylose, L-arabinose or L-arabitol.</text>
</comment>
<comment type="similarity">
    <text evidence="2">Belongs to the FGGY kinase family.</text>
</comment>
<reference key="1">
    <citation type="journal article" date="2015" name="Genome Announc.">
        <title>Genome sequence of Aspergillus flavus NRRL 3357, a strain that causes aflatoxin contamination of food and feed.</title>
        <authorList>
            <person name="Nierman W.C."/>
            <person name="Yu J."/>
            <person name="Fedorova-Abrams N.D."/>
            <person name="Losada L."/>
            <person name="Cleveland T.E."/>
            <person name="Bhatnagar D."/>
            <person name="Bennett J.W."/>
            <person name="Dean R."/>
            <person name="Payne G.A."/>
        </authorList>
    </citation>
    <scope>NUCLEOTIDE SEQUENCE [LARGE SCALE GENOMIC DNA]</scope>
    <source>
        <strain>ATCC 200026 / FGSC A1120 / IAM 13836 / NRRL 3357 / JCM 12722 / SRRC 167</strain>
    </source>
</reference>
<keyword id="KW-0067">ATP-binding</keyword>
<keyword id="KW-0119">Carbohydrate metabolism</keyword>
<keyword id="KW-0963">Cytoplasm</keyword>
<keyword id="KW-0418">Kinase</keyword>
<keyword id="KW-0547">Nucleotide-binding</keyword>
<keyword id="KW-0808">Transferase</keyword>
<keyword id="KW-0859">Xylose metabolism</keyword>
<gene>
    <name type="primary">xkiA</name>
    <name type="ORF">AFLA_098240</name>
</gene>
<accession>B8NTI4</accession>
<feature type="chain" id="PRO_0000393518" description="Probable D-xylulose kinase A">
    <location>
        <begin position="1"/>
        <end position="572"/>
    </location>
</feature>
<feature type="binding site" evidence="1">
    <location>
        <position position="95"/>
    </location>
    <ligand>
        <name>substrate</name>
    </ligand>
</feature>
<feature type="binding site" evidence="1">
    <location>
        <position position="166"/>
    </location>
    <ligand>
        <name>substrate</name>
    </ligand>
</feature>
<feature type="binding site" evidence="1">
    <location>
        <position position="282"/>
    </location>
    <ligand>
        <name>substrate</name>
    </ligand>
</feature>
<feature type="binding site" evidence="1">
    <location>
        <position position="283"/>
    </location>
    <ligand>
        <name>substrate</name>
    </ligand>
</feature>
<feature type="binding site" evidence="1">
    <location>
        <position position="365"/>
    </location>
    <ligand>
        <name>ATP</name>
        <dbReference type="ChEBI" id="CHEBI:30616"/>
    </ligand>
</feature>
<feature type="binding site" evidence="1">
    <location>
        <begin position="470"/>
        <end position="471"/>
    </location>
    <ligand>
        <name>ATP</name>
        <dbReference type="ChEBI" id="CHEBI:30616"/>
    </ligand>
</feature>
<feature type="binding site" evidence="1">
    <location>
        <position position="474"/>
    </location>
    <ligand>
        <name>ATP</name>
        <dbReference type="ChEBI" id="CHEBI:30616"/>
    </ligand>
</feature>